<proteinExistence type="inferred from homology"/>
<keyword id="KW-0687">Ribonucleoprotein</keyword>
<keyword id="KW-0689">Ribosomal protein</keyword>
<keyword id="KW-0694">RNA-binding</keyword>
<keyword id="KW-0699">rRNA-binding</keyword>
<comment type="function">
    <text evidence="1">Binds directly to 16S ribosomal RNA.</text>
</comment>
<comment type="similarity">
    <text evidence="1">Belongs to the bacterial ribosomal protein bS20 family.</text>
</comment>
<sequence length="89" mass="10182">MANHKSAEKRIRQTIKRTERNRFYKTKVKNIIKAVREAVAVNDVAKAQERLKIANKELHKFVSKGILKKNTASRKVSRLNASVKKIALA</sequence>
<organism>
    <name type="scientific">Helicobacter pylori (strain Shi470)</name>
    <dbReference type="NCBI Taxonomy" id="512562"/>
    <lineage>
        <taxon>Bacteria</taxon>
        <taxon>Pseudomonadati</taxon>
        <taxon>Campylobacterota</taxon>
        <taxon>Epsilonproteobacteria</taxon>
        <taxon>Campylobacterales</taxon>
        <taxon>Helicobacteraceae</taxon>
        <taxon>Helicobacter</taxon>
    </lineage>
</organism>
<name>RS20_HELPS</name>
<dbReference type="EMBL" id="CP001072">
    <property type="protein sequence ID" value="ACD47539.1"/>
    <property type="molecule type" value="Genomic_DNA"/>
</dbReference>
<dbReference type="RefSeq" id="WP_001273632.1">
    <property type="nucleotide sequence ID" value="NC_010698.2"/>
</dbReference>
<dbReference type="SMR" id="B2URQ7"/>
<dbReference type="GeneID" id="93236448"/>
<dbReference type="KEGG" id="hps:HPSH_00370"/>
<dbReference type="HOGENOM" id="CLU_160655_3_0_7"/>
<dbReference type="GO" id="GO:0005829">
    <property type="term" value="C:cytosol"/>
    <property type="evidence" value="ECO:0007669"/>
    <property type="project" value="TreeGrafter"/>
</dbReference>
<dbReference type="GO" id="GO:0015935">
    <property type="term" value="C:small ribosomal subunit"/>
    <property type="evidence" value="ECO:0007669"/>
    <property type="project" value="TreeGrafter"/>
</dbReference>
<dbReference type="GO" id="GO:0070181">
    <property type="term" value="F:small ribosomal subunit rRNA binding"/>
    <property type="evidence" value="ECO:0007669"/>
    <property type="project" value="TreeGrafter"/>
</dbReference>
<dbReference type="GO" id="GO:0003735">
    <property type="term" value="F:structural constituent of ribosome"/>
    <property type="evidence" value="ECO:0007669"/>
    <property type="project" value="InterPro"/>
</dbReference>
<dbReference type="GO" id="GO:0006412">
    <property type="term" value="P:translation"/>
    <property type="evidence" value="ECO:0007669"/>
    <property type="project" value="UniProtKB-UniRule"/>
</dbReference>
<dbReference type="FunFam" id="1.20.58.110:FF:000001">
    <property type="entry name" value="30S ribosomal protein S20"/>
    <property type="match status" value="1"/>
</dbReference>
<dbReference type="Gene3D" id="1.20.58.110">
    <property type="entry name" value="Ribosomal protein S20"/>
    <property type="match status" value="1"/>
</dbReference>
<dbReference type="HAMAP" id="MF_00500">
    <property type="entry name" value="Ribosomal_bS20"/>
    <property type="match status" value="1"/>
</dbReference>
<dbReference type="InterPro" id="IPR002583">
    <property type="entry name" value="Ribosomal_bS20"/>
</dbReference>
<dbReference type="InterPro" id="IPR036510">
    <property type="entry name" value="Ribosomal_bS20_sf"/>
</dbReference>
<dbReference type="NCBIfam" id="TIGR00029">
    <property type="entry name" value="S20"/>
    <property type="match status" value="1"/>
</dbReference>
<dbReference type="PANTHER" id="PTHR33398">
    <property type="entry name" value="30S RIBOSOMAL PROTEIN S20"/>
    <property type="match status" value="1"/>
</dbReference>
<dbReference type="PANTHER" id="PTHR33398:SF1">
    <property type="entry name" value="SMALL RIBOSOMAL SUBUNIT PROTEIN BS20C"/>
    <property type="match status" value="1"/>
</dbReference>
<dbReference type="Pfam" id="PF01649">
    <property type="entry name" value="Ribosomal_S20p"/>
    <property type="match status" value="1"/>
</dbReference>
<dbReference type="SUPFAM" id="SSF46992">
    <property type="entry name" value="Ribosomal protein S20"/>
    <property type="match status" value="1"/>
</dbReference>
<accession>B2URQ7</accession>
<gene>
    <name evidence="1" type="primary">rpsT</name>
    <name type="ordered locus">HPSH_00370</name>
</gene>
<protein>
    <recommendedName>
        <fullName evidence="1">Small ribosomal subunit protein bS20</fullName>
    </recommendedName>
    <alternativeName>
        <fullName evidence="2">30S ribosomal protein S20</fullName>
    </alternativeName>
</protein>
<feature type="chain" id="PRO_1000126456" description="Small ribosomal subunit protein bS20">
    <location>
        <begin position="1"/>
        <end position="89"/>
    </location>
</feature>
<reference key="1">
    <citation type="submission" date="2008-05" db="EMBL/GenBank/DDBJ databases">
        <title>Genome sequence of Helicobacter pylori from the remote Amazon: traces of Asian ancestry of the first Americans.</title>
        <authorList>
            <person name="Kersulyte D."/>
            <person name="Kalia A."/>
            <person name="Gilman R.H."/>
            <person name="Berg D.E."/>
        </authorList>
    </citation>
    <scope>NUCLEOTIDE SEQUENCE [LARGE SCALE GENOMIC DNA]</scope>
    <source>
        <strain>Shi470</strain>
    </source>
</reference>
<evidence type="ECO:0000255" key="1">
    <source>
        <dbReference type="HAMAP-Rule" id="MF_00500"/>
    </source>
</evidence>
<evidence type="ECO:0000305" key="2"/>